<comment type="function">
    <text evidence="3">Chloroplastic membrane calcium uniporter that mediates calcium uptake into chloroplast stroma (PubMed:31182842). Constitutes a pore-forming and calcium-conducting subunit (PubMed:31182842). Chloroplastic calcium homeostasis plays key roles in cellular physiology (PubMed:31182842). Promotes calcium uptake into chloroplast stroma in response to osmotic-stress, fine-tuning cytosolic MAPK3/MAPK6 phosphorylation and affecting stomata opening (PubMed:31182842).</text>
</comment>
<comment type="catalytic activity">
    <reaction evidence="3">
        <text>Ca(2+)(in) = Ca(2+)(out)</text>
        <dbReference type="Rhea" id="RHEA:29671"/>
        <dbReference type="ChEBI" id="CHEBI:29108"/>
    </reaction>
</comment>
<comment type="subcellular location">
    <subcellularLocation>
        <location evidence="3">Plastid</location>
        <location evidence="3">Chloroplast membrane</location>
        <topology evidence="2">Multi-pass membrane protein</topology>
    </subcellularLocation>
</comment>
<comment type="disruption phenotype">
    <text evidence="3">Plants are drought resistant and recover quickly following rewatering.</text>
</comment>
<comment type="similarity">
    <text evidence="6">Belongs to the MCU (TC 1.A.77) family.</text>
</comment>
<accession>Q9LVR5</accession>
<accession>Q94B21</accession>
<name>MCU6_ARATH</name>
<gene>
    <name evidence="4" type="primary">MCU6</name>
    <name evidence="7" type="ordered locus">At5g66650</name>
    <name evidence="8" type="ORF">MSN2.3</name>
</gene>
<protein>
    <recommendedName>
        <fullName evidence="5">Chloroplastic calcium uniporter protein</fullName>
        <shortName evidence="5">cMCU</shortName>
    </recommendedName>
    <alternativeName>
        <fullName>Calcium uniporter protein 6, chloroplastic</fullName>
        <shortName evidence="4">AtMCU6</shortName>
    </alternativeName>
</protein>
<feature type="transit peptide" description="Chloroplast" evidence="2">
    <location>
        <begin position="1"/>
        <end position="56"/>
    </location>
</feature>
<feature type="chain" id="PRO_0000431372" description="Chloroplastic calcium uniporter protein">
    <location>
        <begin position="57"/>
        <end position="321"/>
    </location>
</feature>
<feature type="transmembrane region" description="Helical; Name=1" evidence="2">
    <location>
        <begin position="223"/>
        <end position="243"/>
    </location>
</feature>
<feature type="transmembrane region" description="Helical; Name=2" evidence="2">
    <location>
        <begin position="249"/>
        <end position="269"/>
    </location>
</feature>
<feature type="short sequence motif" description="Selectivity filter" evidence="1">
    <location>
        <begin position="247"/>
        <end position="255"/>
    </location>
</feature>
<feature type="binding site" evidence="1">
    <location>
        <position position="251"/>
    </location>
    <ligand>
        <name>Ca(2+)</name>
        <dbReference type="ChEBI" id="CHEBI:29108"/>
    </ligand>
</feature>
<feature type="sequence conflict" description="In Ref. 3; AAK68843." evidence="6" ref="3">
    <original>K</original>
    <variation>E</variation>
    <location>
        <position position="94"/>
    </location>
</feature>
<dbReference type="EMBL" id="AB018119">
    <property type="protein sequence ID" value="BAA97271.1"/>
    <property type="molecule type" value="Genomic_DNA"/>
</dbReference>
<dbReference type="EMBL" id="CP002688">
    <property type="protein sequence ID" value="AED98245.1"/>
    <property type="molecule type" value="Genomic_DNA"/>
</dbReference>
<dbReference type="EMBL" id="AY042903">
    <property type="protein sequence ID" value="AAK68843.1"/>
    <property type="molecule type" value="mRNA"/>
</dbReference>
<dbReference type="EMBL" id="BT020326">
    <property type="protein sequence ID" value="AAV85681.1"/>
    <property type="molecule type" value="mRNA"/>
</dbReference>
<dbReference type="RefSeq" id="NP_201466.1">
    <property type="nucleotide sequence ID" value="NM_126063.3"/>
</dbReference>
<dbReference type="BioGRID" id="22039">
    <property type="interactions" value="4"/>
</dbReference>
<dbReference type="FunCoup" id="Q9LVR5">
    <property type="interactions" value="168"/>
</dbReference>
<dbReference type="IntAct" id="Q9LVR5">
    <property type="interactions" value="4"/>
</dbReference>
<dbReference type="STRING" id="3702.Q9LVR5"/>
<dbReference type="PaxDb" id="3702-AT5G66650.1"/>
<dbReference type="ProteomicsDB" id="238328"/>
<dbReference type="EnsemblPlants" id="AT5G66650.1">
    <property type="protein sequence ID" value="AT5G66650.1"/>
    <property type="gene ID" value="AT5G66650"/>
</dbReference>
<dbReference type="GeneID" id="836797"/>
<dbReference type="Gramene" id="AT5G66650.1">
    <property type="protein sequence ID" value="AT5G66650.1"/>
    <property type="gene ID" value="AT5G66650"/>
</dbReference>
<dbReference type="KEGG" id="ath:AT5G66650"/>
<dbReference type="Araport" id="AT5G66650"/>
<dbReference type="TAIR" id="AT5G66650">
    <property type="gene designation" value="CMCU"/>
</dbReference>
<dbReference type="eggNOG" id="KOG2966">
    <property type="taxonomic scope" value="Eukaryota"/>
</dbReference>
<dbReference type="HOGENOM" id="CLU_066330_0_0_1"/>
<dbReference type="InParanoid" id="Q9LVR5"/>
<dbReference type="OMA" id="CFYVTST"/>
<dbReference type="PhylomeDB" id="Q9LVR5"/>
<dbReference type="PRO" id="PR:Q9LVR5"/>
<dbReference type="Proteomes" id="UP000006548">
    <property type="component" value="Chromosome 5"/>
</dbReference>
<dbReference type="ExpressionAtlas" id="Q9LVR5">
    <property type="expression patterns" value="baseline and differential"/>
</dbReference>
<dbReference type="GO" id="GO:0009941">
    <property type="term" value="C:chloroplast envelope"/>
    <property type="evidence" value="ECO:0000314"/>
    <property type="project" value="TAIR"/>
</dbReference>
<dbReference type="GO" id="GO:0031969">
    <property type="term" value="C:chloroplast membrane"/>
    <property type="evidence" value="ECO:0007669"/>
    <property type="project" value="UniProtKB-SubCell"/>
</dbReference>
<dbReference type="GO" id="GO:0005739">
    <property type="term" value="C:mitochondrion"/>
    <property type="evidence" value="ECO:0007669"/>
    <property type="project" value="GOC"/>
</dbReference>
<dbReference type="GO" id="GO:0005262">
    <property type="term" value="F:calcium channel activity"/>
    <property type="evidence" value="ECO:0000314"/>
    <property type="project" value="TAIR"/>
</dbReference>
<dbReference type="GO" id="GO:0046872">
    <property type="term" value="F:metal ion binding"/>
    <property type="evidence" value="ECO:0007669"/>
    <property type="project" value="UniProtKB-KW"/>
</dbReference>
<dbReference type="GO" id="GO:0015292">
    <property type="term" value="F:uniporter activity"/>
    <property type="evidence" value="ECO:0000314"/>
    <property type="project" value="TAIR"/>
</dbReference>
<dbReference type="GO" id="GO:0070509">
    <property type="term" value="P:calcium ion import"/>
    <property type="evidence" value="ECO:0000315"/>
    <property type="project" value="TAIR"/>
</dbReference>
<dbReference type="GO" id="GO:0071456">
    <property type="term" value="P:cellular response to hypoxia"/>
    <property type="evidence" value="ECO:0007007"/>
    <property type="project" value="TAIR"/>
</dbReference>
<dbReference type="GO" id="GO:0051560">
    <property type="term" value="P:mitochondrial calcium ion homeostasis"/>
    <property type="evidence" value="ECO:0007669"/>
    <property type="project" value="InterPro"/>
</dbReference>
<dbReference type="InterPro" id="IPR006769">
    <property type="entry name" value="MCU_C"/>
</dbReference>
<dbReference type="InterPro" id="IPR039055">
    <property type="entry name" value="MCU_fam"/>
</dbReference>
<dbReference type="PANTHER" id="PTHR13462:SF39">
    <property type="entry name" value="CALCIUM UNIPORTER PROTEIN 3, MITOCHONDRIAL"/>
    <property type="match status" value="1"/>
</dbReference>
<dbReference type="PANTHER" id="PTHR13462">
    <property type="entry name" value="CALCIUM UNIPORTER PROTEIN, MITOCHONDRIAL"/>
    <property type="match status" value="1"/>
</dbReference>
<dbReference type="Pfam" id="PF04678">
    <property type="entry name" value="MCU"/>
    <property type="match status" value="1"/>
</dbReference>
<proteinExistence type="evidence at transcript level"/>
<sequence length="321" mass="36766">MSSKKSLVQSLFNISKTYSRISGLTRMRPTKSGGIPPDAGDSGIRRRFLHKRAFFSPEIVPKGGNLMEKLRELTLSNNNRIRLDEMLPPPSPKKSSPEFFPAVTVEDVKKLMRAAEMELVKSKLREIGKNWVPYSEFVRVCGEYSSDPEQGNRVANMLDEAGNVIVLGKLVCLKPEELTSAMAGLIPTLEPSLDAETRQEFEQLEIIKSDIDKRADDLVRKELWAGLGLIMAQTVGFFRLTFWELSWDVMEPICFYVTSTYFMAGYAFFLRTSKEPSFEGFYKSRFETKQKRLIKMLDFDIDRFTKLQKMHRPNLTKSGRC</sequence>
<organism>
    <name type="scientific">Arabidopsis thaliana</name>
    <name type="common">Mouse-ear cress</name>
    <dbReference type="NCBI Taxonomy" id="3702"/>
    <lineage>
        <taxon>Eukaryota</taxon>
        <taxon>Viridiplantae</taxon>
        <taxon>Streptophyta</taxon>
        <taxon>Embryophyta</taxon>
        <taxon>Tracheophyta</taxon>
        <taxon>Spermatophyta</taxon>
        <taxon>Magnoliopsida</taxon>
        <taxon>eudicotyledons</taxon>
        <taxon>Gunneridae</taxon>
        <taxon>Pentapetalae</taxon>
        <taxon>rosids</taxon>
        <taxon>malvids</taxon>
        <taxon>Brassicales</taxon>
        <taxon>Brassicaceae</taxon>
        <taxon>Camelineae</taxon>
        <taxon>Arabidopsis</taxon>
    </lineage>
</organism>
<evidence type="ECO:0000250" key="1">
    <source>
        <dbReference type="UniProtKB" id="Q8NE86"/>
    </source>
</evidence>
<evidence type="ECO:0000255" key="2"/>
<evidence type="ECO:0000269" key="3">
    <source>
    </source>
</evidence>
<evidence type="ECO:0000303" key="4">
    <source>
    </source>
</evidence>
<evidence type="ECO:0000303" key="5">
    <source>
    </source>
</evidence>
<evidence type="ECO:0000305" key="6"/>
<evidence type="ECO:0000312" key="7">
    <source>
        <dbReference type="Araport" id="AT5G66650"/>
    </source>
</evidence>
<evidence type="ECO:0000312" key="8">
    <source>
        <dbReference type="EMBL" id="BAA97271.1"/>
    </source>
</evidence>
<keyword id="KW-0106">Calcium</keyword>
<keyword id="KW-0107">Calcium channel</keyword>
<keyword id="KW-0109">Calcium transport</keyword>
<keyword id="KW-0150">Chloroplast</keyword>
<keyword id="KW-0407">Ion channel</keyword>
<keyword id="KW-0406">Ion transport</keyword>
<keyword id="KW-0472">Membrane</keyword>
<keyword id="KW-0479">Metal-binding</keyword>
<keyword id="KW-0934">Plastid</keyword>
<keyword id="KW-1185">Reference proteome</keyword>
<keyword id="KW-0809">Transit peptide</keyword>
<keyword id="KW-0812">Transmembrane</keyword>
<keyword id="KW-1133">Transmembrane helix</keyword>
<keyword id="KW-0813">Transport</keyword>
<reference key="1">
    <citation type="journal article" date="2000" name="DNA Res.">
        <title>Structural analysis of Arabidopsis thaliana chromosome 5. X. Sequence features of the regions of 3,076,755 bp covered by sixty P1 and TAC clones.</title>
        <authorList>
            <person name="Sato S."/>
            <person name="Nakamura Y."/>
            <person name="Kaneko T."/>
            <person name="Katoh T."/>
            <person name="Asamizu E."/>
            <person name="Kotani H."/>
            <person name="Tabata S."/>
        </authorList>
    </citation>
    <scope>NUCLEOTIDE SEQUENCE [LARGE SCALE GENOMIC DNA]</scope>
    <source>
        <strain>cv. Columbia</strain>
    </source>
</reference>
<reference key="2">
    <citation type="journal article" date="2017" name="Plant J.">
        <title>Araport11: a complete reannotation of the Arabidopsis thaliana reference genome.</title>
        <authorList>
            <person name="Cheng C.Y."/>
            <person name="Krishnakumar V."/>
            <person name="Chan A.P."/>
            <person name="Thibaud-Nissen F."/>
            <person name="Schobel S."/>
            <person name="Town C.D."/>
        </authorList>
    </citation>
    <scope>GENOME REANNOTATION</scope>
    <source>
        <strain>cv. Columbia</strain>
    </source>
</reference>
<reference key="3">
    <citation type="journal article" date="2003" name="Science">
        <title>Empirical analysis of transcriptional activity in the Arabidopsis genome.</title>
        <authorList>
            <person name="Yamada K."/>
            <person name="Lim J."/>
            <person name="Dale J.M."/>
            <person name="Chen H."/>
            <person name="Shinn P."/>
            <person name="Palm C.J."/>
            <person name="Southwick A.M."/>
            <person name="Wu H.C."/>
            <person name="Kim C.J."/>
            <person name="Nguyen M."/>
            <person name="Pham P.K."/>
            <person name="Cheuk R.F."/>
            <person name="Karlin-Newmann G."/>
            <person name="Liu S.X."/>
            <person name="Lam B."/>
            <person name="Sakano H."/>
            <person name="Wu T."/>
            <person name="Yu G."/>
            <person name="Miranda M."/>
            <person name="Quach H.L."/>
            <person name="Tripp M."/>
            <person name="Chang C.H."/>
            <person name="Lee J.M."/>
            <person name="Toriumi M.J."/>
            <person name="Chan M.M."/>
            <person name="Tang C.C."/>
            <person name="Onodera C.S."/>
            <person name="Deng J.M."/>
            <person name="Akiyama K."/>
            <person name="Ansari Y."/>
            <person name="Arakawa T."/>
            <person name="Banh J."/>
            <person name="Banno F."/>
            <person name="Bowser L."/>
            <person name="Brooks S.Y."/>
            <person name="Carninci P."/>
            <person name="Chao Q."/>
            <person name="Choy N."/>
            <person name="Enju A."/>
            <person name="Goldsmith A.D."/>
            <person name="Gurjal M."/>
            <person name="Hansen N.F."/>
            <person name="Hayashizaki Y."/>
            <person name="Johnson-Hopson C."/>
            <person name="Hsuan V.W."/>
            <person name="Iida K."/>
            <person name="Karnes M."/>
            <person name="Khan S."/>
            <person name="Koesema E."/>
            <person name="Ishida J."/>
            <person name="Jiang P.X."/>
            <person name="Jones T."/>
            <person name="Kawai J."/>
            <person name="Kamiya A."/>
            <person name="Meyers C."/>
            <person name="Nakajima M."/>
            <person name="Narusaka M."/>
            <person name="Seki M."/>
            <person name="Sakurai T."/>
            <person name="Satou M."/>
            <person name="Tamse R."/>
            <person name="Vaysberg M."/>
            <person name="Wallender E.K."/>
            <person name="Wong C."/>
            <person name="Yamamura Y."/>
            <person name="Yuan S."/>
            <person name="Shinozaki K."/>
            <person name="Davis R.W."/>
            <person name="Theologis A."/>
            <person name="Ecker J.R."/>
        </authorList>
    </citation>
    <scope>NUCLEOTIDE SEQUENCE [LARGE SCALE MRNA]</scope>
    <source>
        <strain>cv. Columbia</strain>
    </source>
</reference>
<reference key="4">
    <citation type="submission" date="2004-12" db="EMBL/GenBank/DDBJ databases">
        <title>Arabidopsis ORF clones.</title>
        <authorList>
            <person name="Kim C.J."/>
            <person name="Chen H."/>
            <person name="Cheuk R."/>
            <person name="Shinn P."/>
            <person name="Ecker J.R."/>
        </authorList>
    </citation>
    <scope>NUCLEOTIDE SEQUENCE [LARGE SCALE MRNA]</scope>
    <source>
        <strain>cv. Columbia</strain>
    </source>
</reference>
<reference key="5">
    <citation type="journal article" date="2012" name="J. Exp. Bot.">
        <title>Plant organellar calcium signalling: an emerging field.</title>
        <authorList>
            <person name="Stael S."/>
            <person name="Wurzinger B."/>
            <person name="Mair A."/>
            <person name="Mehlmer N."/>
            <person name="Vothknecht U.C."/>
            <person name="Teige M."/>
        </authorList>
    </citation>
    <scope>GENE FAMILY</scope>
    <scope>REVIEW</scope>
</reference>
<reference key="6">
    <citation type="journal article" date="2017" name="Plant Physiol.">
        <title>Physiological Characterization of a Plant Mitochondrial Calcium Uniporter in Vitro and in Vivo.</title>
        <authorList>
            <person name="Teardo E."/>
            <person name="Carraretto L."/>
            <person name="Wagner S."/>
            <person name="Formentin E."/>
            <person name="Behera S."/>
            <person name="De Bortoli S."/>
            <person name="Larosa V."/>
            <person name="Fuchs P."/>
            <person name="Lo Schiavo F."/>
            <person name="Raffaello A."/>
            <person name="Rizzuto R."/>
            <person name="Costa A."/>
            <person name="Schwarzlaender M."/>
            <person name="Szabo I."/>
        </authorList>
    </citation>
    <scope>NOMENCLATURE</scope>
</reference>
<reference key="7">
    <citation type="journal article" date="2019" name="Nat. Plants">
        <title>A chloroplast-localized mitochondrial calcium uniporter transduces osmotic stress in Arabidopsis.</title>
        <authorList>
            <person name="Teardo E."/>
            <person name="Carraretto L."/>
            <person name="Moscatiello R."/>
            <person name="Cortese E."/>
            <person name="Vicario M."/>
            <person name="Festa M."/>
            <person name="Maso L."/>
            <person name="De Bortoli S."/>
            <person name="Cali T."/>
            <person name="Vothknecht U.C."/>
            <person name="Formentin E."/>
            <person name="Cendron L."/>
            <person name="Navazio L."/>
            <person name="Szabo I."/>
        </authorList>
    </citation>
    <scope>FUNCTION</scope>
    <scope>TRANSPORTER ACTIVITY</scope>
    <scope>SUBCELLULAR LOCATION</scope>
    <scope>DISRUPTION PHENOTYPE</scope>
</reference>